<dbReference type="EMBL" id="U39060">
    <property type="protein sequence ID" value="AAC53151.1"/>
    <property type="molecule type" value="mRNA"/>
</dbReference>
<dbReference type="EMBL" id="AF000582">
    <property type="protein sequence ID" value="AAB61575.1"/>
    <property type="status" value="ALT_FRAME"/>
    <property type="molecule type" value="mRNA"/>
</dbReference>
<dbReference type="EMBL" id="AC091248">
    <property type="status" value="NOT_ANNOTATED_CDS"/>
    <property type="molecule type" value="Genomic_DNA"/>
</dbReference>
<dbReference type="EMBL" id="AC121538">
    <property type="status" value="NOT_ANNOTATED_CDS"/>
    <property type="molecule type" value="Genomic_DNA"/>
</dbReference>
<dbReference type="CCDS" id="CCDS35515.1"/>
<dbReference type="PIR" id="T30193">
    <property type="entry name" value="T30193"/>
</dbReference>
<dbReference type="PIR" id="T42639">
    <property type="entry name" value="T42639"/>
</dbReference>
<dbReference type="RefSeq" id="NP_032704.2">
    <property type="nucleotide sequence ID" value="NM_008678.3"/>
</dbReference>
<dbReference type="RefSeq" id="XP_006495528.1">
    <property type="nucleotide sequence ID" value="XM_006495465.3"/>
</dbReference>
<dbReference type="RefSeq" id="XP_036018585.1">
    <property type="nucleotide sequence ID" value="XM_036162692.1"/>
</dbReference>
<dbReference type="RefSeq" id="XP_036018587.1">
    <property type="nucleotide sequence ID" value="XM_036162694.1"/>
</dbReference>
<dbReference type="RefSeq" id="XP_036018591.1">
    <property type="nucleotide sequence ID" value="XM_036162698.1"/>
</dbReference>
<dbReference type="PDB" id="1L2I">
    <property type="method" value="X-ray"/>
    <property type="resolution" value="1.95 A"/>
    <property type="chains" value="C/D=686-698"/>
</dbReference>
<dbReference type="PDB" id="1OSV">
    <property type="method" value="X-ray"/>
    <property type="resolution" value="2.50 A"/>
    <property type="chains" value="C/D/E=741-752"/>
</dbReference>
<dbReference type="PDB" id="1WM0">
    <property type="method" value="X-ray"/>
    <property type="resolution" value="2.90 A"/>
    <property type="chains" value="Y=684-697"/>
</dbReference>
<dbReference type="PDB" id="2Q6J">
    <property type="method" value="X-ray"/>
    <property type="resolution" value="2.70 A"/>
    <property type="chains" value="C/D=686-698"/>
</dbReference>
<dbReference type="PDB" id="2QA6">
    <property type="method" value="X-ray"/>
    <property type="resolution" value="2.60 A"/>
    <property type="chains" value="C/D=686-698"/>
</dbReference>
<dbReference type="PDB" id="2QA8">
    <property type="method" value="X-ray"/>
    <property type="resolution" value="1.85 A"/>
    <property type="chains" value="C/D=686-698"/>
</dbReference>
<dbReference type="PDB" id="2QAB">
    <property type="method" value="X-ray"/>
    <property type="resolution" value="1.89 A"/>
    <property type="chains" value="C/D=686-698"/>
</dbReference>
<dbReference type="PDB" id="2QGT">
    <property type="method" value="X-ray"/>
    <property type="resolution" value="2.15 A"/>
    <property type="chains" value="C/D=686-698"/>
</dbReference>
<dbReference type="PDB" id="2QGW">
    <property type="method" value="X-ray"/>
    <property type="resolution" value="2.39 A"/>
    <property type="chains" value="C/D=686-698"/>
</dbReference>
<dbReference type="PDB" id="2QH6">
    <property type="method" value="X-ray"/>
    <property type="resolution" value="2.70 A"/>
    <property type="chains" value="C/D=686-698"/>
</dbReference>
<dbReference type="PDB" id="2QPY">
    <property type="method" value="X-ray"/>
    <property type="resolution" value="2.50 A"/>
    <property type="chains" value="B=744-753"/>
</dbReference>
<dbReference type="PDB" id="2QR9">
    <property type="method" value="X-ray"/>
    <property type="resolution" value="2.00 A"/>
    <property type="chains" value="C/D=686-698"/>
</dbReference>
<dbReference type="PDB" id="2QSE">
    <property type="method" value="X-ray"/>
    <property type="resolution" value="1.85 A"/>
    <property type="chains" value="C/D=686-698"/>
</dbReference>
<dbReference type="PDB" id="2QXM">
    <property type="method" value="X-ray"/>
    <property type="resolution" value="2.30 A"/>
    <property type="chains" value="C/D=686-698"/>
</dbReference>
<dbReference type="PDB" id="2QZO">
    <property type="method" value="X-ray"/>
    <property type="resolution" value="1.72 A"/>
    <property type="chains" value="C/D=686-698"/>
</dbReference>
<dbReference type="PDB" id="3MNE">
    <property type="method" value="X-ray"/>
    <property type="resolution" value="1.96 A"/>
    <property type="chains" value="B=740-752"/>
</dbReference>
<dbReference type="PDB" id="3MNO">
    <property type="method" value="X-ray"/>
    <property type="resolution" value="1.55 A"/>
    <property type="chains" value="B=740-752"/>
</dbReference>
<dbReference type="PDB" id="3MNP">
    <property type="method" value="X-ray"/>
    <property type="resolution" value="1.50 A"/>
    <property type="chains" value="B=740-752"/>
</dbReference>
<dbReference type="PDBsum" id="1L2I"/>
<dbReference type="PDBsum" id="1OSV"/>
<dbReference type="PDBsum" id="1WM0"/>
<dbReference type="PDBsum" id="2Q6J"/>
<dbReference type="PDBsum" id="2QA6"/>
<dbReference type="PDBsum" id="2QA8"/>
<dbReference type="PDBsum" id="2QAB"/>
<dbReference type="PDBsum" id="2QGT"/>
<dbReference type="PDBsum" id="2QGW"/>
<dbReference type="PDBsum" id="2QH6"/>
<dbReference type="PDBsum" id="2QPY"/>
<dbReference type="PDBsum" id="2QR9"/>
<dbReference type="PDBsum" id="2QSE"/>
<dbReference type="PDBsum" id="2QXM"/>
<dbReference type="PDBsum" id="2QZO"/>
<dbReference type="PDBsum" id="3MNE"/>
<dbReference type="PDBsum" id="3MNO"/>
<dbReference type="PDBsum" id="3MNP"/>
<dbReference type="SMR" id="Q61026"/>
<dbReference type="BioGRID" id="201708">
    <property type="interactions" value="18"/>
</dbReference>
<dbReference type="ComplexPortal" id="CPX-643">
    <property type="entry name" value="RXRalpha-NCOA2 activated retinoic acid receptor complex"/>
</dbReference>
<dbReference type="ComplexPortal" id="CPX-668">
    <property type="entry name" value="RARalpha-NCOA2 activated retinoic acid receptor complex"/>
</dbReference>
<dbReference type="ComplexPortal" id="CPX-703">
    <property type="entry name" value="PPARgamma-NCOA2 activated nuclear receptor complex"/>
</dbReference>
<dbReference type="ComplexPortal" id="CPX-818">
    <property type="entry name" value="RXRalpha-RARalpha-NCOA2 retinoic acid receptor complex"/>
</dbReference>
<dbReference type="CORUM" id="Q61026"/>
<dbReference type="DIP" id="DIP-5979N"/>
<dbReference type="FunCoup" id="Q61026">
    <property type="interactions" value="3233"/>
</dbReference>
<dbReference type="IntAct" id="Q61026">
    <property type="interactions" value="12"/>
</dbReference>
<dbReference type="MINT" id="Q61026"/>
<dbReference type="STRING" id="10090.ENSMUSP00000006037"/>
<dbReference type="GlyGen" id="Q61026">
    <property type="glycosylation" value="8 sites, 5 N-linked glycans (5 sites), 1 O-linked glycan (3 sites)"/>
</dbReference>
<dbReference type="iPTMnet" id="Q61026"/>
<dbReference type="PhosphoSitePlus" id="Q61026"/>
<dbReference type="SwissPalm" id="Q61026"/>
<dbReference type="jPOST" id="Q61026"/>
<dbReference type="PaxDb" id="10090-ENSMUSP00000006037"/>
<dbReference type="ProteomicsDB" id="287453"/>
<dbReference type="Pumba" id="Q61026"/>
<dbReference type="Antibodypedia" id="6252">
    <property type="antibodies" value="306 antibodies from 32 providers"/>
</dbReference>
<dbReference type="DNASU" id="17978"/>
<dbReference type="Ensembl" id="ENSMUST00000006037.13">
    <property type="protein sequence ID" value="ENSMUSP00000006037.7"/>
    <property type="gene ID" value="ENSMUSG00000005886.15"/>
</dbReference>
<dbReference type="GeneID" id="17978"/>
<dbReference type="KEGG" id="mmu:17978"/>
<dbReference type="UCSC" id="uc007aim.2">
    <property type="organism name" value="mouse"/>
</dbReference>
<dbReference type="AGR" id="MGI:1276533"/>
<dbReference type="CTD" id="10499"/>
<dbReference type="MGI" id="MGI:1276533">
    <property type="gene designation" value="Ncoa2"/>
</dbReference>
<dbReference type="VEuPathDB" id="HostDB:ENSMUSG00000005886"/>
<dbReference type="eggNOG" id="KOG3561">
    <property type="taxonomic scope" value="Eukaryota"/>
</dbReference>
<dbReference type="GeneTree" id="ENSGT00950000183021"/>
<dbReference type="InParanoid" id="Q61026"/>
<dbReference type="OMA" id="PIMPNAQ"/>
<dbReference type="OrthoDB" id="10035882at2759"/>
<dbReference type="PhylomeDB" id="Q61026"/>
<dbReference type="TreeFam" id="TF332652"/>
<dbReference type="Reactome" id="R-MMU-159418">
    <property type="pathway name" value="Recycling of bile acids and salts"/>
</dbReference>
<dbReference type="Reactome" id="R-MMU-192105">
    <property type="pathway name" value="Synthesis of bile acids and bile salts"/>
</dbReference>
<dbReference type="Reactome" id="R-MMU-193368">
    <property type="pathway name" value="Synthesis of bile acids and bile salts via 7alpha-hydroxycholesterol"/>
</dbReference>
<dbReference type="Reactome" id="R-MMU-193807">
    <property type="pathway name" value="Synthesis of bile acids and bile salts via 27-hydroxycholesterol"/>
</dbReference>
<dbReference type="Reactome" id="R-MMU-211976">
    <property type="pathway name" value="Endogenous sterols"/>
</dbReference>
<dbReference type="Reactome" id="R-MMU-3214847">
    <property type="pathway name" value="HATs acetylate histones"/>
</dbReference>
<dbReference type="Reactome" id="R-MMU-400206">
    <property type="pathway name" value="Regulation of lipid metabolism by PPARalpha"/>
</dbReference>
<dbReference type="Reactome" id="R-MMU-5625886">
    <property type="pathway name" value="Activated PKN1 stimulates transcription of AR (androgen receptor) regulated genes KLK2 and KLK3"/>
</dbReference>
<dbReference type="Reactome" id="R-MMU-9018519">
    <property type="pathway name" value="Estrogen-dependent gene expression"/>
</dbReference>
<dbReference type="Reactome" id="R-MMU-9707564">
    <property type="pathway name" value="Cytoprotection by HMOX1"/>
</dbReference>
<dbReference type="BioGRID-ORCS" id="17978">
    <property type="hits" value="4 hits in 83 CRISPR screens"/>
</dbReference>
<dbReference type="ChiTaRS" id="Ncoa2">
    <property type="organism name" value="mouse"/>
</dbReference>
<dbReference type="EvolutionaryTrace" id="Q61026"/>
<dbReference type="PRO" id="PR:Q61026"/>
<dbReference type="Proteomes" id="UP000000589">
    <property type="component" value="Chromosome 1"/>
</dbReference>
<dbReference type="RNAct" id="Q61026">
    <property type="molecule type" value="protein"/>
</dbReference>
<dbReference type="Bgee" id="ENSMUSG00000005886">
    <property type="expression patterns" value="Expressed in substantia nigra and 231 other cell types or tissues"/>
</dbReference>
<dbReference type="ExpressionAtlas" id="Q61026">
    <property type="expression patterns" value="baseline and differential"/>
</dbReference>
<dbReference type="GO" id="GO:0005737">
    <property type="term" value="C:cytoplasm"/>
    <property type="evidence" value="ECO:0000314"/>
    <property type="project" value="MGI"/>
</dbReference>
<dbReference type="GO" id="GO:0016604">
    <property type="term" value="C:nuclear body"/>
    <property type="evidence" value="ECO:0007669"/>
    <property type="project" value="Ensembl"/>
</dbReference>
<dbReference type="GO" id="GO:0005654">
    <property type="term" value="C:nucleoplasm"/>
    <property type="evidence" value="ECO:0000304"/>
    <property type="project" value="Reactome"/>
</dbReference>
<dbReference type="GO" id="GO:0005634">
    <property type="term" value="C:nucleus"/>
    <property type="evidence" value="ECO:0000314"/>
    <property type="project" value="MGI"/>
</dbReference>
<dbReference type="GO" id="GO:0090575">
    <property type="term" value="C:RNA polymerase II transcription regulator complex"/>
    <property type="evidence" value="ECO:0000250"/>
    <property type="project" value="ComplexPortal"/>
</dbReference>
<dbReference type="GO" id="GO:0005667">
    <property type="term" value="C:transcription regulator complex"/>
    <property type="evidence" value="ECO:0000353"/>
    <property type="project" value="ComplexPortal"/>
</dbReference>
<dbReference type="GO" id="GO:0017162">
    <property type="term" value="F:aryl hydrocarbon receptor binding"/>
    <property type="evidence" value="ECO:0007669"/>
    <property type="project" value="Ensembl"/>
</dbReference>
<dbReference type="GO" id="GO:0003682">
    <property type="term" value="F:chromatin binding"/>
    <property type="evidence" value="ECO:0000314"/>
    <property type="project" value="MGI"/>
</dbReference>
<dbReference type="GO" id="GO:0016922">
    <property type="term" value="F:nuclear receptor binding"/>
    <property type="evidence" value="ECO:0007669"/>
    <property type="project" value="Ensembl"/>
</dbReference>
<dbReference type="GO" id="GO:0046983">
    <property type="term" value="F:protein dimerization activity"/>
    <property type="evidence" value="ECO:0007669"/>
    <property type="project" value="InterPro"/>
</dbReference>
<dbReference type="GO" id="GO:0019904">
    <property type="term" value="F:protein domain specific binding"/>
    <property type="evidence" value="ECO:0007669"/>
    <property type="project" value="Ensembl"/>
</dbReference>
<dbReference type="GO" id="GO:0000978">
    <property type="term" value="F:RNA polymerase II cis-regulatory region sequence-specific DNA binding"/>
    <property type="evidence" value="ECO:0000314"/>
    <property type="project" value="MGI"/>
</dbReference>
<dbReference type="GO" id="GO:0001162">
    <property type="term" value="F:RNA polymerase II intronic transcription regulatory region sequence-specific DNA binding"/>
    <property type="evidence" value="ECO:0000314"/>
    <property type="project" value="MGI"/>
</dbReference>
<dbReference type="GO" id="GO:0061629">
    <property type="term" value="F:RNA polymerase II-specific DNA-binding transcription factor binding"/>
    <property type="evidence" value="ECO:0000353"/>
    <property type="project" value="UniProtKB"/>
</dbReference>
<dbReference type="GO" id="GO:0005102">
    <property type="term" value="F:signaling receptor binding"/>
    <property type="evidence" value="ECO:0000314"/>
    <property type="project" value="MGI"/>
</dbReference>
<dbReference type="GO" id="GO:0003713">
    <property type="term" value="F:transcription coactivator activity"/>
    <property type="evidence" value="ECO:0000314"/>
    <property type="project" value="UniProtKB"/>
</dbReference>
<dbReference type="GO" id="GO:0140416">
    <property type="term" value="F:transcription regulator inhibitor activity"/>
    <property type="evidence" value="ECO:0007669"/>
    <property type="project" value="Ensembl"/>
</dbReference>
<dbReference type="GO" id="GO:1904017">
    <property type="term" value="P:cellular response to Thyroglobulin triiodothyronine"/>
    <property type="evidence" value="ECO:0000314"/>
    <property type="project" value="MGI"/>
</dbReference>
<dbReference type="GO" id="GO:0032922">
    <property type="term" value="P:circadian regulation of gene expression"/>
    <property type="evidence" value="ECO:0000315"/>
    <property type="project" value="UniProtKB"/>
</dbReference>
<dbReference type="GO" id="GO:0007623">
    <property type="term" value="P:circadian rhythm"/>
    <property type="evidence" value="ECO:0000270"/>
    <property type="project" value="UniProtKB"/>
</dbReference>
<dbReference type="GO" id="GO:0045475">
    <property type="term" value="P:locomotor rhythm"/>
    <property type="evidence" value="ECO:0000315"/>
    <property type="project" value="UniProtKB"/>
</dbReference>
<dbReference type="GO" id="GO:0042789">
    <property type="term" value="P:mRNA transcription by RNA polymerase II"/>
    <property type="evidence" value="ECO:0000250"/>
    <property type="project" value="ComplexPortal"/>
</dbReference>
<dbReference type="GO" id="GO:0045892">
    <property type="term" value="P:negative regulation of DNA-templated transcription"/>
    <property type="evidence" value="ECO:0000314"/>
    <property type="project" value="MGI"/>
</dbReference>
<dbReference type="GO" id="GO:0045879">
    <property type="term" value="P:negative regulation of smoothened signaling pathway"/>
    <property type="evidence" value="ECO:0007669"/>
    <property type="project" value="Ensembl"/>
</dbReference>
<dbReference type="GO" id="GO:0000122">
    <property type="term" value="P:negative regulation of transcription by RNA polymerase II"/>
    <property type="evidence" value="ECO:0000314"/>
    <property type="project" value="MGI"/>
</dbReference>
<dbReference type="GO" id="GO:0035357">
    <property type="term" value="P:peroxisome proliferator activated receptor signaling pathway"/>
    <property type="evidence" value="ECO:0000303"/>
    <property type="project" value="ComplexPortal"/>
</dbReference>
<dbReference type="GO" id="GO:1904179">
    <property type="term" value="P:positive regulation of adipose tissue development"/>
    <property type="evidence" value="ECO:0000303"/>
    <property type="project" value="ComplexPortal"/>
</dbReference>
<dbReference type="GO" id="GO:0045944">
    <property type="term" value="P:positive regulation of transcription by RNA polymerase II"/>
    <property type="evidence" value="ECO:0000316"/>
    <property type="project" value="MGI"/>
</dbReference>
<dbReference type="GO" id="GO:1900076">
    <property type="term" value="P:regulation of cellular response to insulin stimulus"/>
    <property type="evidence" value="ECO:0000303"/>
    <property type="project" value="ComplexPortal"/>
</dbReference>
<dbReference type="GO" id="GO:0006355">
    <property type="term" value="P:regulation of DNA-templated transcription"/>
    <property type="evidence" value="ECO:0000314"/>
    <property type="project" value="MGI"/>
</dbReference>
<dbReference type="GO" id="GO:0010468">
    <property type="term" value="P:regulation of gene expression"/>
    <property type="evidence" value="ECO:0000315"/>
    <property type="project" value="MGI"/>
</dbReference>
<dbReference type="GO" id="GO:0010906">
    <property type="term" value="P:regulation of glucose metabolic process"/>
    <property type="evidence" value="ECO:0000315"/>
    <property type="project" value="UniProtKB"/>
</dbReference>
<dbReference type="GO" id="GO:0019216">
    <property type="term" value="P:regulation of lipid metabolic process"/>
    <property type="evidence" value="ECO:0000314"/>
    <property type="project" value="UniProtKB"/>
</dbReference>
<dbReference type="GO" id="GO:0032570">
    <property type="term" value="P:response to progesterone"/>
    <property type="evidence" value="ECO:0000315"/>
    <property type="project" value="MGI"/>
</dbReference>
<dbReference type="CDD" id="cd18950">
    <property type="entry name" value="bHLH-PAS_NCoA2_SRC2"/>
    <property type="match status" value="1"/>
</dbReference>
<dbReference type="CDD" id="cd00130">
    <property type="entry name" value="PAS"/>
    <property type="match status" value="1"/>
</dbReference>
<dbReference type="FunFam" id="3.30.450.20:FF:000007">
    <property type="entry name" value="Nuclear receptor coactivator"/>
    <property type="match status" value="1"/>
</dbReference>
<dbReference type="FunFam" id="3.30.450.20:FF:000008">
    <property type="entry name" value="Nuclear receptor coactivator"/>
    <property type="match status" value="1"/>
</dbReference>
<dbReference type="FunFam" id="4.10.280.10:FF:000008">
    <property type="entry name" value="Nuclear receptor coactivator"/>
    <property type="match status" value="1"/>
</dbReference>
<dbReference type="Gene3D" id="4.10.280.10">
    <property type="entry name" value="Helix-loop-helix DNA-binding domain"/>
    <property type="match status" value="1"/>
</dbReference>
<dbReference type="Gene3D" id="6.10.140.20">
    <property type="entry name" value="Nuclear receptor coactivator, Ncoa-type, interlocking domain"/>
    <property type="match status" value="1"/>
</dbReference>
<dbReference type="Gene3D" id="3.30.450.20">
    <property type="entry name" value="PAS domain"/>
    <property type="match status" value="2"/>
</dbReference>
<dbReference type="InterPro" id="IPR011598">
    <property type="entry name" value="bHLH_dom"/>
</dbReference>
<dbReference type="InterPro" id="IPR056193">
    <property type="entry name" value="bHLH_NCOA1-3"/>
</dbReference>
<dbReference type="InterPro" id="IPR036638">
    <property type="entry name" value="HLH_DNA-bd_sf"/>
</dbReference>
<dbReference type="InterPro" id="IPR010011">
    <property type="entry name" value="NCO_DUF1518"/>
</dbReference>
<dbReference type="InterPro" id="IPR032565">
    <property type="entry name" value="NCOA2/3_DUF4927"/>
</dbReference>
<dbReference type="InterPro" id="IPR028822">
    <property type="entry name" value="NCOA2_bHLH"/>
</dbReference>
<dbReference type="InterPro" id="IPR009110">
    <property type="entry name" value="Nuc_rcpt_coact"/>
</dbReference>
<dbReference type="InterPro" id="IPR014920">
    <property type="entry name" value="Nuc_rcpt_coact_Ncoa-typ"/>
</dbReference>
<dbReference type="InterPro" id="IPR037077">
    <property type="entry name" value="Nuc_rcpt_coact_Ncoa_int_sf"/>
</dbReference>
<dbReference type="InterPro" id="IPR017426">
    <property type="entry name" value="Nuclear_rcpt_coactivator"/>
</dbReference>
<dbReference type="InterPro" id="IPR000014">
    <property type="entry name" value="PAS"/>
</dbReference>
<dbReference type="InterPro" id="IPR035965">
    <property type="entry name" value="PAS-like_dom_sf"/>
</dbReference>
<dbReference type="InterPro" id="IPR013767">
    <property type="entry name" value="PAS_fold"/>
</dbReference>
<dbReference type="InterPro" id="IPR014935">
    <property type="entry name" value="SRC/p160_LXXLL"/>
</dbReference>
<dbReference type="PANTHER" id="PTHR10684">
    <property type="entry name" value="NUCLEAR RECEPTOR COACTIVATOR"/>
    <property type="match status" value="1"/>
</dbReference>
<dbReference type="PANTHER" id="PTHR10684:SF2">
    <property type="entry name" value="NUCLEAR RECEPTOR COACTIVATOR 2"/>
    <property type="match status" value="1"/>
</dbReference>
<dbReference type="Pfam" id="PF23172">
    <property type="entry name" value="bHLH_NCOA"/>
    <property type="match status" value="1"/>
</dbReference>
<dbReference type="Pfam" id="PF07469">
    <property type="entry name" value="DUF1518"/>
    <property type="match status" value="1"/>
</dbReference>
<dbReference type="Pfam" id="PF16279">
    <property type="entry name" value="DUF4927"/>
    <property type="match status" value="1"/>
</dbReference>
<dbReference type="Pfam" id="PF16665">
    <property type="entry name" value="NCOA_u2"/>
    <property type="match status" value="1"/>
</dbReference>
<dbReference type="Pfam" id="PF08815">
    <property type="entry name" value="Nuc_rec_co-act"/>
    <property type="match status" value="1"/>
</dbReference>
<dbReference type="Pfam" id="PF00989">
    <property type="entry name" value="PAS"/>
    <property type="match status" value="1"/>
</dbReference>
<dbReference type="Pfam" id="PF14598">
    <property type="entry name" value="PAS_11"/>
    <property type="match status" value="1"/>
</dbReference>
<dbReference type="Pfam" id="PF08832">
    <property type="entry name" value="SRC-1"/>
    <property type="match status" value="1"/>
</dbReference>
<dbReference type="PIRSF" id="PIRSF038181">
    <property type="entry name" value="Nuclear_receptor_coactivator"/>
    <property type="match status" value="1"/>
</dbReference>
<dbReference type="SMART" id="SM01151">
    <property type="entry name" value="DUF1518"/>
    <property type="match status" value="1"/>
</dbReference>
<dbReference type="SMART" id="SM00353">
    <property type="entry name" value="HLH"/>
    <property type="match status" value="1"/>
</dbReference>
<dbReference type="SMART" id="SM00091">
    <property type="entry name" value="PAS"/>
    <property type="match status" value="1"/>
</dbReference>
<dbReference type="SUPFAM" id="SSF47459">
    <property type="entry name" value="HLH, helix-loop-helix DNA-binding domain"/>
    <property type="match status" value="1"/>
</dbReference>
<dbReference type="SUPFAM" id="SSF69125">
    <property type="entry name" value="Nuclear receptor coactivator interlocking domain"/>
    <property type="match status" value="1"/>
</dbReference>
<dbReference type="SUPFAM" id="SSF55785">
    <property type="entry name" value="PYP-like sensor domain (PAS domain)"/>
    <property type="match status" value="2"/>
</dbReference>
<dbReference type="PROSITE" id="PS50888">
    <property type="entry name" value="BHLH"/>
    <property type="match status" value="1"/>
</dbReference>
<dbReference type="PROSITE" id="PS50112">
    <property type="entry name" value="PAS"/>
    <property type="match status" value="1"/>
</dbReference>
<accession>Q61026</accession>
<accession>E9QMH9</accession>
<accession>O09001</accession>
<accession>P97759</accession>
<comment type="function">
    <text evidence="6 8 10 11 12 13">Transcriptional coactivator for steroid receptors and nuclear receptors (PubMed:11997499, PubMed:12507421, PubMed:16148126, PubMed:19039140, PubMed:31851938). Coactivator of the steroid binding domain (AF-2) but not of the modulating N-terminal domain (AF-1) (PubMed:11997499, PubMed:12507421, PubMed:16148126, PubMed:19039140). Required with NCOA1 to control energy balance between white and brown adipose tissues (PubMed:11997499, PubMed:12507421, PubMed:16148126, PubMed:19039140). Critical regulator of glucose metabolism regulation, acts as a RORA coactivator to specifically modulate G6PC1 expression (PubMed:11997499, PubMed:12507421, PubMed:16148126, PubMed:19039140). Involved in the positive regulation of the transcriptional activity of the glucocorticoid receptor NR3C1 by sumoylation enhancer RWDD3 (PubMed:11997499, PubMed:12507421, PubMed:16148126, PubMed:19039140). Positively regulates the circadian clock by acting as a transcriptional coactivator for the CLOCK-BMAL1 heterodimer (PubMed:24529706).</text>
</comment>
<comment type="subunit">
    <text evidence="1 5 6 7 9 10 11 12 14">Present in a complex containing NCOA3, IKKA, IKKB, IKBKG and CREBBP (By similarity). Present in a complex containing CARM1 and EP300/P300 (PubMed:10381882, PubMed:11997499). Interacts (via C-terminus) with CREBBP (By similarity). Interacts (via LXXLL 1, 2 and 3 motifs) with RORA (via AF-2 motif) (PubMed:19039140). Interacts (via LXXLL 1, 2 and 3 motifs) with RORC (via AF-2 motif) (PubMed:16148126). Interacts with APEX1 (By similarity). Interacts with BMAL1 (PubMed:24529706). Interacts with CARM1 (PubMed:10381882). Interacts with CASP8AP2 (PubMed:12477726). Interacts with CLOCK (PubMed:24529706). Interacts with DDX5 (By similarity). Interacts with ESR1 (By similarity). Interacts with HIF1A (By similarity). Interacts with NCOA1 (By similarity). Interacts with NR4A1/Nur77 (By similarity). Interacts with NR4A3; potentiates the activity of the NR4A3 (PubMed:12709428). Interacts with NR1H3 (By similarity). Interacts with NR3C1 (By similarity). Interacts with NR3C2 (PubMed:9111344). Interacts with PSMB9 (By similarity). Interacts with RARA (By similarity). Interacts with RXRA (By similarity). Interacts with RWDD3 (By similarity). Interacts with TTLL5/STAMP (By similarity). Interacts with NR5A2 (By similarity).</text>
</comment>
<comment type="interaction">
    <interactant intactId="EBI-688662">
        <id>Q61026</id>
    </interactant>
    <interactant intactId="EBI-15746366">
        <id>Q4FZB7-1</id>
        <label>KMT5B</label>
    </interactant>
    <organismsDiffer>true</organismsDiffer>
    <experiments>4</experiments>
</comment>
<comment type="interaction">
    <interactant intactId="EBI-688662">
        <id>Q61026</id>
    </interactant>
    <interactant intactId="EBI-15750116">
        <id>P04150-1</id>
        <label>NR3C1</label>
    </interactant>
    <organismsDiffer>true</organismsDiffer>
    <experiments>3</experiments>
</comment>
<comment type="subcellular location">
    <subcellularLocation>
        <location evidence="1">Nucleus</location>
    </subcellularLocation>
</comment>
<comment type="tissue specificity">
    <text>Ubiquitous.</text>
</comment>
<comment type="induction">
    <text evidence="12">Expressed in a circadian manner in the liver, brown adipose tissue (BAT), white adipose tissue (WAT), heart, skeletal muscle and suprachiasmatic nucleus (SCN) of the brain. Shows a higher expression during the light phase compared with the dark phase.</text>
</comment>
<comment type="domain">
    <text evidence="1">Contains four Leu-Xaa-Xaa-Leu-Leu (LXXLL) motifs. The LXXLL motifs are essential for the association with nuclear receptors and are, at least in part, functionally redundant.</text>
</comment>
<comment type="domain">
    <text evidence="1">The LLXXLXXXL motif is involved in transcriptional coactivation and CREBBP/CBP binding.</text>
</comment>
<comment type="domain">
    <text evidence="1">Contains 2 C-terminal transcription activation domains (AD1 and AD2) that can function independently.</text>
</comment>
<comment type="PTM">
    <text evidence="13">Acetylated (PubMed:31851938). Deacetylation at Lys-780 by SIRT6 stimulates its ability to coactivate PPARA (PubMed:31851938).</text>
</comment>
<comment type="disruption phenotype">
    <text evidence="11">Animals show a glycogenopathy resembling to Von Gierke's disease with impaired growth, fasting hypoglycemia, and an increase in concentrations of triglycerides, cholesterol, free fatty acids, ketone bodies, uric acid and lactic acid in the plasma during fating. They also have increased liver glycogen stores and hepatic steatosis.</text>
</comment>
<comment type="similarity">
    <text evidence="16">Belongs to the SRC/p160 nuclear receptor coactivator family.</text>
</comment>
<comment type="sequence caution" evidence="16">
    <conflict type="frameshift">
        <sequence resource="EMBL-CDS" id="AAB61575"/>
    </conflict>
</comment>
<gene>
    <name type="primary">Ncoa2</name>
    <name evidence="15" type="synonym">Grip1</name>
    <name type="synonym">Src2</name>
    <name type="synonym">Tif2</name>
</gene>
<sequence length="1462" mass="158466">MSGMGENTSDPSRAETRKRKECPDQLGPSPKRSTEKRNREQENKYIEELAELIFANFNDIDNFNFKPDKCAILKETVKQIRQIKEQEKAAAANIDEVQKSDVSSTGQGVIDKDALGPMMLEALDGFFFVVNLEGSVVFVSENVTQYLRYNQEELMNKSVYSILHVGDHTEFVKNLLPKSMVNGGSWSGEPPRRSSHTFNCRMLVKPLPDSEEEGHDSQEAHQKYEAMQCFAVSQPKSIKEEGEDLQSCLICVARRVPMKERPTLPSSESFTTRQDLQGKITSLDTSTMRAAMKPGWEDLVRRCIQKFHTQHEGESLSYAKRHHHEVLRQGLAFSQIYRFSLSDGTLVAAQTKSKLIRSQTTNEPQLVISLHMLHREQNVCVMNPDLTGQAMGKPLNPISSSSPAHQALCSGNPGQDMTLGSNINFPMNGPKEQMGMPMGRFGGSGGMNHVSGMQATTPQGSNYALKMNSPSQSSPGMNPGQASSVLSPRQRMSPGVAGSPRIPPSQFSPAGSLHSPVGVCSSTGNSHSYTNSSLNALQALSEGHGVSLGSSLASPDLKMGNLQNSPVNMNPPPLSKMGSLDSKDCFGLYGEPSEGTTGQAEASCHPEEQKGPNDSSMPQAASGDRAEGHSRLHDSKGQTKLLQLLTTKSDQMEPSPLPSSLSDTNKDSTGSLPGPGSTHGTSLKEKHKILHRLLQDSSSPVDLAKLTAEATGKELSQESSSTAPGSEVTVKQEPASPKKKENALLRYLLDKDDTKDIGLPEITPKLERLDSKTDPASNTKLIAMKTVKEEVSFEPSDQPGSELDNLEEILDDLQNSQLPQLFPDTRPGAPTGSVDKQAIINDLMQLTADSSPVPPAGAQKAALRMSQSTFNNPRPGQLGRLLPNQNLPLDITLQSPTGAGPFPPIRNSSPYSVIPQPGMMGNQGMLGSQGNLGNNSTGMIGSSTSRPSMPSGEWAPQSPAVRVTCAATTGAMNRPVQGGMIRNPTASIPMRANSQPGQRQMLQSQVMNIGPSELEMNMGGPQYNQQQAPPNQTAPWPESILPIDQASFASQNRQPFGSSPDDLLCPHPAAESPSDEGALLDQLYLALRNFDGLEEIDRALGIPELVSQSQAVDAEQFSSQESSIMLEQKPPVFPQQYASQAQMAQGGYNPMQDPNFHTMGQRPNYTTLRMQPRPGLRPTGIVQNQPNQLRLQLQHRLQAQQNRQPLMNQISSVSNVNLTLRPGVPTQAPINAQMLAQRQREILNQHLRQRQMQQQVQQRTLMMRGQGLNVTPSMVAPAGLPAAMSNPRIPQANAQQFPFPPNYGISQQPDPGFTGATTPQSPLMSPRMAHTQSPMMQQSQANPAYQPTSDMNGWAQGSMGGNSMFSQQSPPHFGQQANTSMYSNNMNISVSMATNTGGLSSMNQMTGQMSMTSVTSVPTSGLPSMGPEQVNDPALRGGNLFPNQLPGMDMIKQEGDASRKYC</sequence>
<keyword id="KW-0002">3D-structure</keyword>
<keyword id="KW-0007">Acetylation</keyword>
<keyword id="KW-0010">Activator</keyword>
<keyword id="KW-0090">Biological rhythms</keyword>
<keyword id="KW-1017">Isopeptide bond</keyword>
<keyword id="KW-0488">Methylation</keyword>
<keyword id="KW-0539">Nucleus</keyword>
<keyword id="KW-0597">Phosphoprotein</keyword>
<keyword id="KW-1185">Reference proteome</keyword>
<keyword id="KW-0677">Repeat</keyword>
<keyword id="KW-0804">Transcription</keyword>
<keyword id="KW-0805">Transcription regulation</keyword>
<keyword id="KW-0832">Ubl conjugation</keyword>
<proteinExistence type="evidence at protein level"/>
<name>NCOA2_MOUSE</name>
<evidence type="ECO:0000250" key="1">
    <source>
        <dbReference type="UniProtKB" id="Q15596"/>
    </source>
</evidence>
<evidence type="ECO:0000255" key="2">
    <source>
        <dbReference type="PROSITE-ProRule" id="PRU00140"/>
    </source>
</evidence>
<evidence type="ECO:0000255" key="3">
    <source>
        <dbReference type="PROSITE-ProRule" id="PRU00981"/>
    </source>
</evidence>
<evidence type="ECO:0000256" key="4">
    <source>
        <dbReference type="SAM" id="MobiDB-lite"/>
    </source>
</evidence>
<evidence type="ECO:0000269" key="5">
    <source>
    </source>
</evidence>
<evidence type="ECO:0000269" key="6">
    <source>
    </source>
</evidence>
<evidence type="ECO:0000269" key="7">
    <source>
    </source>
</evidence>
<evidence type="ECO:0000269" key="8">
    <source>
    </source>
</evidence>
<evidence type="ECO:0000269" key="9">
    <source>
    </source>
</evidence>
<evidence type="ECO:0000269" key="10">
    <source>
    </source>
</evidence>
<evidence type="ECO:0000269" key="11">
    <source>
    </source>
</evidence>
<evidence type="ECO:0000269" key="12">
    <source>
    </source>
</evidence>
<evidence type="ECO:0000269" key="13">
    <source>
    </source>
</evidence>
<evidence type="ECO:0000269" key="14">
    <source>
    </source>
</evidence>
<evidence type="ECO:0000303" key="15">
    <source>
    </source>
</evidence>
<evidence type="ECO:0000305" key="16"/>
<evidence type="ECO:0007744" key="17">
    <source>
    </source>
</evidence>
<evidence type="ECO:0007744" key="18">
    <source>
    </source>
</evidence>
<evidence type="ECO:0007744" key="19">
    <source>
    </source>
</evidence>
<evidence type="ECO:0007744" key="20">
    <source>
    </source>
</evidence>
<evidence type="ECO:0007829" key="21">
    <source>
        <dbReference type="PDB" id="2QZO"/>
    </source>
</evidence>
<evidence type="ECO:0007829" key="22">
    <source>
        <dbReference type="PDB" id="3MNP"/>
    </source>
</evidence>
<feature type="initiator methionine" description="Removed" evidence="1">
    <location>
        <position position="1"/>
    </location>
</feature>
<feature type="chain" id="PRO_0000094403" description="Nuclear receptor coactivator 2">
    <location>
        <begin position="2"/>
        <end position="1462"/>
    </location>
</feature>
<feature type="domain" description="bHLH" evidence="3">
    <location>
        <begin position="26"/>
        <end position="83"/>
    </location>
</feature>
<feature type="domain" description="PAS" evidence="2">
    <location>
        <begin position="119"/>
        <end position="183"/>
    </location>
</feature>
<feature type="region of interest" description="Disordered" evidence="4">
    <location>
        <begin position="1"/>
        <end position="40"/>
    </location>
</feature>
<feature type="region of interest" description="Disordered" evidence="4">
    <location>
        <begin position="467"/>
        <end position="513"/>
    </location>
</feature>
<feature type="region of interest" description="Disordered" evidence="4">
    <location>
        <begin position="557"/>
        <end position="636"/>
    </location>
</feature>
<feature type="region of interest" description="Disordered" evidence="4">
    <location>
        <begin position="648"/>
        <end position="742"/>
    </location>
</feature>
<feature type="region of interest" description="CASP8AP2-binding" evidence="7">
    <location>
        <begin position="691"/>
        <end position="743"/>
    </location>
</feature>
<feature type="region of interest" description="Interaction with BMAL1" evidence="12">
    <location>
        <begin position="730"/>
        <end position="1121"/>
    </location>
</feature>
<feature type="region of interest" description="Disordered" evidence="4">
    <location>
        <begin position="1051"/>
        <end position="1071"/>
    </location>
</feature>
<feature type="region of interest" description="Disordered" evidence="4">
    <location>
        <begin position="1309"/>
        <end position="1328"/>
    </location>
</feature>
<feature type="short sequence motif" description="LXXLL motif 1">
    <location>
        <begin position="641"/>
        <end position="645"/>
    </location>
</feature>
<feature type="short sequence motif" description="LXXLL motif 2">
    <location>
        <begin position="690"/>
        <end position="694"/>
    </location>
</feature>
<feature type="short sequence motif" description="LXXLL motif 3">
    <location>
        <begin position="745"/>
        <end position="749"/>
    </location>
</feature>
<feature type="short sequence motif" description="LXXLL motif 4">
    <location>
        <begin position="878"/>
        <end position="882"/>
    </location>
</feature>
<feature type="short sequence motif" description="LLXXLXXXL motif">
    <location>
        <begin position="1079"/>
        <end position="1087"/>
    </location>
</feature>
<feature type="compositionally biased region" description="Polar residues" evidence="4">
    <location>
        <begin position="1"/>
        <end position="11"/>
    </location>
</feature>
<feature type="compositionally biased region" description="Polar residues" evidence="4">
    <location>
        <begin position="467"/>
        <end position="487"/>
    </location>
</feature>
<feature type="compositionally biased region" description="Basic and acidic residues" evidence="4">
    <location>
        <begin position="624"/>
        <end position="636"/>
    </location>
</feature>
<feature type="compositionally biased region" description="Polar residues" evidence="4">
    <location>
        <begin position="658"/>
        <end position="671"/>
    </location>
</feature>
<feature type="compositionally biased region" description="Polar residues" evidence="4">
    <location>
        <begin position="1309"/>
        <end position="1323"/>
    </location>
</feature>
<feature type="modified residue" description="N-acetylserine" evidence="1">
    <location>
        <position position="2"/>
    </location>
</feature>
<feature type="modified residue" description="Phosphoserine" evidence="1">
    <location>
        <position position="29"/>
    </location>
</feature>
<feature type="modified residue" description="Asymmetric dimethylarginine" evidence="20">
    <location>
        <position position="338"/>
    </location>
</feature>
<feature type="modified residue" description="Phosphoserine" evidence="18">
    <location>
        <position position="487"/>
    </location>
</feature>
<feature type="modified residue" description="Phosphoserine" evidence="17">
    <location>
        <position position="493"/>
    </location>
</feature>
<feature type="modified residue" description="Phosphoserine" evidence="1">
    <location>
        <position position="499"/>
    </location>
</feature>
<feature type="modified residue" description="Phosphoserine" evidence="1">
    <location>
        <position position="554"/>
    </location>
</feature>
<feature type="modified residue" description="Phosphoserine" evidence="18">
    <location>
        <position position="565"/>
    </location>
</feature>
<feature type="modified residue" description="N6-acetyllysine" evidence="19">
    <location>
        <position position="636"/>
    </location>
</feature>
<feature type="modified residue" description="N6-acetyllysine" evidence="19">
    <location>
        <position position="640"/>
    </location>
</feature>
<feature type="modified residue" description="Phosphoserine" evidence="1">
    <location>
        <position position="682"/>
    </location>
</feature>
<feature type="modified residue" description="Phosphoserine" evidence="17 18">
    <location>
        <position position="699"/>
    </location>
</feature>
<feature type="modified residue" description="Phosphoserine" evidence="1">
    <location>
        <position position="736"/>
    </location>
</feature>
<feature type="modified residue" description="Phosphoserine" evidence="17">
    <location>
        <position position="771"/>
    </location>
</feature>
<feature type="modified residue" description="N6-acetyllysine" evidence="13 19">
    <location>
        <position position="780"/>
    </location>
</feature>
<feature type="modified residue" description="N6-acetyllysine" evidence="19">
    <location>
        <position position="785"/>
    </location>
</feature>
<feature type="modified residue" description="Asymmetric dimethylarginine" evidence="20">
    <location>
        <position position="864"/>
    </location>
</feature>
<feature type="modified residue" description="Asymmetric dimethylarginine" evidence="20">
    <location>
        <position position="874"/>
    </location>
</feature>
<feature type="modified residue" description="Asymmetric dimethylarginine" evidence="20">
    <location>
        <position position="1173"/>
    </location>
</feature>
<feature type="modified residue" description="Asymmetric dimethylarginine" evidence="20">
    <location>
        <position position="1177"/>
    </location>
</feature>
<feature type="modified residue" description="Asymmetric dimethylarginine" evidence="20">
    <location>
        <position position="1190"/>
    </location>
</feature>
<feature type="modified residue" description="Asymmetric dimethylarginine" evidence="1">
    <location>
        <position position="1196"/>
    </location>
</feature>
<feature type="modified residue" description="Asymmetric dimethylarginine" evidence="20">
    <location>
        <position position="1203"/>
    </location>
</feature>
<feature type="modified residue" description="Asymmetric dimethylarginine" evidence="20">
    <location>
        <position position="1221"/>
    </location>
</feature>
<feature type="modified residue" description="Asymmetric dimethylarginine" evidence="20">
    <location>
        <position position="1240"/>
    </location>
</feature>
<feature type="modified residue" description="Omega-N-methylarginine" evidence="1">
    <location>
        <position position="1259"/>
    </location>
</feature>
<feature type="modified residue" description="Asymmetric dimethylarginine" evidence="1">
    <location>
        <position position="1264"/>
    </location>
</feature>
<feature type="cross-link" description="Glycyl lysine isopeptide (Lys-Gly) (interchain with G-Cter in SUMO2)" evidence="1">
    <location>
        <position position="239"/>
    </location>
</feature>
<feature type="cross-link" description="Glycyl lysine isopeptide (Lys-Gly) (interchain with G-Cter in SUMO2)" evidence="1">
    <location>
        <position position="648"/>
    </location>
</feature>
<feature type="cross-link" description="Glycyl lysine isopeptide (Lys-Gly) (interchain with G-Cter in SUMO2)" evidence="1">
    <location>
        <position position="705"/>
    </location>
</feature>
<feature type="cross-link" description="Glycyl lysine isopeptide (Lys-Gly) (interchain with G-Cter in SUMO2)" evidence="1">
    <location>
        <position position="731"/>
    </location>
</feature>
<feature type="cross-link" description="Glycyl lysine isopeptide (Lys-Gly) (interchain with G-Cter in SUMO2); alternate" evidence="1">
    <location>
        <position position="785"/>
    </location>
</feature>
<feature type="cross-link" description="Glycyl lysine isopeptide (Lys-Gly) (interchain with G-Cter in SUMO2)" evidence="1">
    <location>
        <position position="1452"/>
    </location>
</feature>
<feature type="mutagenesis site" description="Abolishes interaction with RORC; when associated with 689-A--A-694 and 744-A--A-749." evidence="10">
    <original>LL</original>
    <variation>AA</variation>
    <location>
        <begin position="644"/>
        <end position="645"/>
    </location>
</feature>
<feature type="mutagenesis site" description="Abolishes interaction with RORC; when associated with 644-A-A-645 and 744-A--A-749." evidence="10">
    <original>ILHRLL</original>
    <variation>AAHRAA</variation>
    <location>
        <begin position="689"/>
        <end position="694"/>
    </location>
</feature>
<feature type="mutagenesis site" description="Abolishes interaction with RORC; when associated with 644-A-A-645 and 689-A--A-694." evidence="10">
    <original>LLRYLL</original>
    <variation>AARAA</variation>
    <location>
        <begin position="744"/>
        <end position="749"/>
    </location>
</feature>
<feature type="sequence conflict" description="In Ref. 1; AAC53151." evidence="16" ref="1">
    <original>E</original>
    <variation>D</variation>
    <location>
        <position position="51"/>
    </location>
</feature>
<feature type="sequence conflict" description="In Ref. 2; AAB61575." evidence="16" ref="2">
    <original>SE</original>
    <variation>FR</variation>
    <location>
        <begin position="140"/>
        <end position="141"/>
    </location>
</feature>
<feature type="sequence conflict" description="In Ref. 1; AAC53151." evidence="16" ref="1">
    <original>S</original>
    <variation>T</variation>
    <location>
        <position position="194"/>
    </location>
</feature>
<feature type="sequence conflict" description="In Ref. 2; AAB61575." evidence="16" ref="2">
    <original>V</original>
    <variation>I</variation>
    <location>
        <position position="256"/>
    </location>
</feature>
<feature type="sequence conflict" description="In Ref. 2; AAB61575." evidence="16" ref="2">
    <original>S</original>
    <variation>T</variation>
    <location>
        <position position="286"/>
    </location>
</feature>
<feature type="sequence conflict" description="In Ref. 2; AAB61575." evidence="16" ref="2">
    <original>G</original>
    <variation>S</variation>
    <location>
        <position position="420"/>
    </location>
</feature>
<feature type="sequence conflict" description="In Ref. 2; AAB61575." evidence="16" ref="2">
    <original>S</original>
    <variation>N</variation>
    <location>
        <position position="512"/>
    </location>
</feature>
<feature type="sequence conflict" description="In Ref. 2; AAB61575." evidence="16" ref="2">
    <original>E</original>
    <variation>K</variation>
    <location>
        <position position="594"/>
    </location>
</feature>
<feature type="sequence conflict" description="In Ref. 2; AAB61575." evidence="16" ref="2">
    <original>EE</original>
    <variation>KK</variation>
    <location>
        <begin position="607"/>
        <end position="608"/>
    </location>
</feature>
<feature type="sequence conflict" description="In Ref. 2; AAB61575." evidence="16" ref="2">
    <original>R</original>
    <variation>C</variation>
    <location>
        <position position="864"/>
    </location>
</feature>
<feature type="sequence conflict" description="In Ref. 2; AAB61575." evidence="16" ref="2">
    <original>T</original>
    <variation>S</variation>
    <location>
        <position position="869"/>
    </location>
</feature>
<feature type="sequence conflict" description="In Ref. 2; AAB61575." evidence="16" ref="2">
    <original>N</original>
    <variation>Y</variation>
    <location>
        <position position="884"/>
    </location>
</feature>
<feature type="sequence conflict" description="In Ref. 2; AAB61575." evidence="16" ref="2">
    <original>M</original>
    <variation>K</variation>
    <location>
        <position position="972"/>
    </location>
</feature>
<feature type="sequence conflict" description="In Ref. 2; AAB61575." evidence="16" ref="2">
    <original>M</original>
    <variation>K</variation>
    <location>
        <position position="980"/>
    </location>
</feature>
<feature type="sequence conflict" description="In Ref. 2; AAB61575." evidence="16" ref="2">
    <original>R</original>
    <variation>G</variation>
    <location>
        <position position="991"/>
    </location>
</feature>
<feature type="sequence conflict" description="In Ref. 2; AAB61575." evidence="16" ref="2">
    <original>P</original>
    <variation>L</variation>
    <location>
        <position position="996"/>
    </location>
</feature>
<feature type="sequence conflict" description="In Ref. 1; AAC53151." evidence="16" ref="1">
    <original>G</original>
    <variation>C</variation>
    <location>
        <position position="1407"/>
    </location>
</feature>
<feature type="sequence conflict" description="In Ref. 2; AAB61575." evidence="16" ref="2">
    <original>P</original>
    <variation>L</variation>
    <location>
        <position position="1446"/>
    </location>
</feature>
<feature type="helix" evidence="21">
    <location>
        <begin position="689"/>
        <end position="694"/>
    </location>
</feature>
<feature type="helix" evidence="22">
    <location>
        <begin position="743"/>
        <end position="749"/>
    </location>
</feature>
<organism>
    <name type="scientific">Mus musculus</name>
    <name type="common">Mouse</name>
    <dbReference type="NCBI Taxonomy" id="10090"/>
    <lineage>
        <taxon>Eukaryota</taxon>
        <taxon>Metazoa</taxon>
        <taxon>Chordata</taxon>
        <taxon>Craniata</taxon>
        <taxon>Vertebrata</taxon>
        <taxon>Euteleostomi</taxon>
        <taxon>Mammalia</taxon>
        <taxon>Eutheria</taxon>
        <taxon>Euarchontoglires</taxon>
        <taxon>Glires</taxon>
        <taxon>Rodentia</taxon>
        <taxon>Myomorpha</taxon>
        <taxon>Muroidea</taxon>
        <taxon>Muridae</taxon>
        <taxon>Murinae</taxon>
        <taxon>Mus</taxon>
        <taxon>Mus</taxon>
    </lineage>
</organism>
<protein>
    <recommendedName>
        <fullName>Nuclear receptor coactivator 2</fullName>
        <shortName>NCoA-2</shortName>
    </recommendedName>
    <alternativeName>
        <fullName evidence="15">Glucocorticoid receptor-interacting protein 1</fullName>
        <shortName evidence="15">GRIP-1</shortName>
    </alternativeName>
    <alternativeName>
        <fullName>Steroid receptor coactivator 2</fullName>
        <shortName>SRC-2</shortName>
    </alternativeName>
    <alternativeName>
        <fullName>Transcriptional intermediary factor 2</fullName>
    </alternativeName>
</protein>
<reference key="1">
    <citation type="journal article" date="1997" name="Mol. Cell. Biol.">
        <title>GRIP1, a transcriptional coactivator for the AF-2 transactivation domain of steroid, thyroid, retinoid, and vitamin D receptors.</title>
        <authorList>
            <person name="Hong H."/>
            <person name="Kohli K."/>
            <person name="Garabedian M.J."/>
            <person name="Stallcup M.R."/>
        </authorList>
    </citation>
    <scope>NUCLEOTIDE SEQUENCE [MRNA]</scope>
    <scope>INTERACTION WITH NR3C2</scope>
    <source>
        <strain>ICR</strain>
        <tissue>Brain</tissue>
    </source>
</reference>
<reference key="2">
    <citation type="journal article" date="1997" name="Nature">
        <title>The transcriptional co-activator p/CIP binds CBP and mediates nuclear-receptor function.</title>
        <authorList>
            <person name="Torchia J."/>
            <person name="Rose D.W."/>
            <person name="Inostroza J."/>
            <person name="Kamei Y."/>
            <person name="Westin S."/>
            <person name="Glass C.K."/>
            <person name="Rosenfeld M.G."/>
        </authorList>
    </citation>
    <scope>NUCLEOTIDE SEQUENCE [MRNA]</scope>
</reference>
<reference key="3">
    <citation type="journal article" date="2009" name="PLoS Biol.">
        <title>Lineage-specific biology revealed by a finished genome assembly of the mouse.</title>
        <authorList>
            <person name="Church D.M."/>
            <person name="Goodstadt L."/>
            <person name="Hillier L.W."/>
            <person name="Zody M.C."/>
            <person name="Goldstein S."/>
            <person name="She X."/>
            <person name="Bult C.J."/>
            <person name="Agarwala R."/>
            <person name="Cherry J.L."/>
            <person name="DiCuccio M."/>
            <person name="Hlavina W."/>
            <person name="Kapustin Y."/>
            <person name="Meric P."/>
            <person name="Maglott D."/>
            <person name="Birtle Z."/>
            <person name="Marques A.C."/>
            <person name="Graves T."/>
            <person name="Zhou S."/>
            <person name="Teague B."/>
            <person name="Potamousis K."/>
            <person name="Churas C."/>
            <person name="Place M."/>
            <person name="Herschleb J."/>
            <person name="Runnheim R."/>
            <person name="Forrest D."/>
            <person name="Amos-Landgraf J."/>
            <person name="Schwartz D.C."/>
            <person name="Cheng Z."/>
            <person name="Lindblad-Toh K."/>
            <person name="Eichler E.E."/>
            <person name="Ponting C.P."/>
        </authorList>
    </citation>
    <scope>NUCLEOTIDE SEQUENCE [LARGE SCALE GENOMIC DNA]</scope>
    <source>
        <strain>C57BL/6J</strain>
    </source>
</reference>
<reference key="4">
    <citation type="journal article" date="1996" name="Proc. Natl. Acad. Sci. U.S.A.">
        <title>GRIP1, a novel mouse protein that serves as a transcriptional coactivator in yeast for the hormone binding domains of steroid receptors.</title>
        <authorList>
            <person name="Hong H."/>
            <person name="Kohli K."/>
            <person name="Trivedi A."/>
            <person name="Johnson D.L."/>
            <person name="Stallcup M.R."/>
        </authorList>
    </citation>
    <scope>NUCLEOTIDE SEQUENCE [MRNA] OF 322-1119</scope>
    <source>
        <strain>ICR</strain>
        <tissue>Embryo</tissue>
    </source>
</reference>
<reference key="5">
    <citation type="journal article" date="1999" name="Science">
        <title>Regulation of transcription by a protein methyltransferase.</title>
        <authorList>
            <person name="Chen D."/>
            <person name="Ma H."/>
            <person name="Hong H."/>
            <person name="Koh S.S."/>
            <person name="Huang S.-M."/>
            <person name="Schurter B.T."/>
            <person name="Aswad D.W."/>
            <person name="Stallcup M.R."/>
        </authorList>
    </citation>
    <scope>INTERACTION WITH CARM1</scope>
</reference>
<reference key="6">
    <citation type="journal article" date="2002" name="Cell">
        <title>SRC-1 and TIF2 control energy balance between white and brown adipose tissues.</title>
        <authorList>
            <person name="Picard F."/>
            <person name="Gehin M."/>
            <person name="Annicotte J.-S."/>
            <person name="Rocchi S."/>
            <person name="Champy M.-F."/>
            <person name="O'Malley B.W."/>
            <person name="Chambon P."/>
            <person name="Auwerx J."/>
        </authorList>
    </citation>
    <scope>FUNCTION</scope>
</reference>
<reference key="7">
    <citation type="journal article" date="2002" name="Mol. Cell. Biol.">
        <title>Synergy among nuclear receptor coactivators: selective requirement for protein methyltransferase and acetyltransferase activities.</title>
        <authorList>
            <person name="Lee Y.-H."/>
            <person name="Koh S.S."/>
            <person name="Zhang X."/>
            <person name="Cheng X."/>
            <person name="Stallcup M.R."/>
        </authorList>
    </citation>
    <scope>FUNCTION</scope>
    <scope>IDENTIFICATION IN A COMPLEX WITH EP300 AND NCOA2</scope>
</reference>
<reference key="8">
    <citation type="journal article" date="2003" name="J. Biol. Chem.">
        <title>Tumor necrosis factor alpha receptor- and Fas-associated FLASH inhibit transcriptional activity of the glucocorticoid receptor by binding to and interfering with its interaction with p160 type nuclear receptor coactivators.</title>
        <authorList>
            <person name="Kino T."/>
            <person name="Chrousos G.P."/>
        </authorList>
    </citation>
    <scope>INTERACTION WITH CASP8AP2</scope>
</reference>
<reference key="9">
    <citation type="journal article" date="2003" name="J. Biol. Chem.">
        <title>The AF-1 domain of the orphan nuclear receptor NOR-1 mediates trans-activation, coactivator recruitment, and activation by the purine anti-metabolite 6-mercaptopurine.</title>
        <authorList>
            <person name="Wansa K.D."/>
            <person name="Harris J.M."/>
            <person name="Yan G."/>
            <person name="Ordentlich P."/>
            <person name="Muscat G.E."/>
        </authorList>
    </citation>
    <scope>INTERACTION WITH NR4A3</scope>
</reference>
<reference key="10">
    <citation type="journal article" date="2005" name="J. Immunol.">
        <title>RORgammat recruits steroid receptor coactivators to ensure thymocyte survival.</title>
        <authorList>
            <person name="Xie H."/>
            <person name="Sadim M.S."/>
            <person name="Sun Z."/>
        </authorList>
    </citation>
    <scope>FUNCTION AS COACTIVATOR</scope>
    <scope>INTERACTION WITH RORC</scope>
    <scope>DOMAIN</scope>
    <scope>MUTAGENESIS OF 644-L-L-645; 689-L--L-694; 744-L--L-749</scope>
</reference>
<reference key="11">
    <citation type="journal article" date="2007" name="Proc. Natl. Acad. Sci. U.S.A.">
        <title>Large-scale phosphorylation analysis of mouse liver.</title>
        <authorList>
            <person name="Villen J."/>
            <person name="Beausoleil S.A."/>
            <person name="Gerber S.A."/>
            <person name="Gygi S.P."/>
        </authorList>
    </citation>
    <scope>IDENTIFICATION BY MASS SPECTROMETRY [LARGE SCALE ANALYSIS]</scope>
    <source>
        <tissue>Liver</tissue>
    </source>
</reference>
<reference key="12">
    <citation type="journal article" date="2007" name="Science">
        <title>ATM and ATR substrate analysis reveals extensive protein networks responsive to DNA damage.</title>
        <authorList>
            <person name="Matsuoka S."/>
            <person name="Ballif B.A."/>
            <person name="Smogorzewska A."/>
            <person name="McDonald E.R. III"/>
            <person name="Hurov K.E."/>
            <person name="Luo J."/>
            <person name="Bakalarski C.E."/>
            <person name="Zhao Z."/>
            <person name="Solimini N."/>
            <person name="Lerenthal Y."/>
            <person name="Shiloh Y."/>
            <person name="Gygi S.P."/>
            <person name="Elledge S.J."/>
        </authorList>
    </citation>
    <scope>IDENTIFICATION BY MASS SPECTROMETRY [LARGE SCALE ANALYSIS]</scope>
    <source>
        <tissue>Embryonic fibroblast</tissue>
    </source>
</reference>
<reference key="13">
    <citation type="journal article" date="2008" name="Science">
        <title>Absence of the SRC-2 coactivator results in a glycogenopathy resembling Von Gierke's disease.</title>
        <authorList>
            <person name="Chopra A.R."/>
            <person name="Louet J.F."/>
            <person name="Saha P."/>
            <person name="An J."/>
            <person name="Demayo F."/>
            <person name="Xu J."/>
            <person name="York B."/>
            <person name="Karpen S."/>
            <person name="Finegold M."/>
            <person name="Moore D."/>
            <person name="Chan L."/>
            <person name="Newgard C.B."/>
            <person name="O'Malley B.W."/>
        </authorList>
    </citation>
    <scope>FUNCTION IN GLUCOSE METABOLISM REGULATION</scope>
    <scope>INTERACTION WITH RORA</scope>
    <scope>DISRUPTION PHENOTYPE</scope>
</reference>
<reference key="14">
    <citation type="journal article" date="2009" name="Immunity">
        <title>The phagosomal proteome in interferon-gamma-activated macrophages.</title>
        <authorList>
            <person name="Trost M."/>
            <person name="English L."/>
            <person name="Lemieux S."/>
            <person name="Courcelles M."/>
            <person name="Desjardins M."/>
            <person name="Thibault P."/>
        </authorList>
    </citation>
    <scope>PHOSPHORYLATION [LARGE SCALE ANALYSIS] AT SER-493; SER-699 AND SER-771</scope>
    <scope>IDENTIFICATION BY MASS SPECTROMETRY [LARGE SCALE ANALYSIS]</scope>
</reference>
<reference key="15">
    <citation type="journal article" date="2010" name="Cell">
        <title>A tissue-specific atlas of mouse protein phosphorylation and expression.</title>
        <authorList>
            <person name="Huttlin E.L."/>
            <person name="Jedrychowski M.P."/>
            <person name="Elias J.E."/>
            <person name="Goswami T."/>
            <person name="Rad R."/>
            <person name="Beausoleil S.A."/>
            <person name="Villen J."/>
            <person name="Haas W."/>
            <person name="Sowa M.E."/>
            <person name="Gygi S.P."/>
        </authorList>
    </citation>
    <scope>PHOSPHORYLATION [LARGE SCALE ANALYSIS] AT SER-487; SER-565 AND SER-699</scope>
    <scope>IDENTIFICATION BY MASS SPECTROMETRY [LARGE SCALE ANALYSIS]</scope>
    <source>
        <tissue>Brain</tissue>
        <tissue>Kidney</tissue>
        <tissue>Lung</tissue>
        <tissue>Pancreas</tissue>
        <tissue>Spleen</tissue>
        <tissue>Testis</tissue>
    </source>
</reference>
<reference key="16">
    <citation type="journal article" date="2011" name="Nature">
        <title>Suppression of TH17 differentiation and autoimmunity by a synthetic ROR ligand.</title>
        <authorList>
            <person name="Solt L.A."/>
            <person name="Kumar N."/>
            <person name="Nuhant P."/>
            <person name="Wang Y."/>
            <person name="Lauer J.L."/>
            <person name="Liu J."/>
            <person name="Istrate M.A."/>
            <person name="Kamenecka T.M."/>
            <person name="Roush W.R."/>
            <person name="Vidovic D."/>
            <person name="Schuerer S.C."/>
            <person name="Xu J."/>
            <person name="Wagoner G."/>
            <person name="Drew P.D."/>
            <person name="Griffin P.R."/>
            <person name="Burris T.P."/>
        </authorList>
    </citation>
    <scope>INTERACTS WITH RORA AND RORC</scope>
</reference>
<reference key="17">
    <citation type="journal article" date="2013" name="Mol. Cell">
        <title>SIRT5-mediated lysine desuccinylation impacts diverse metabolic pathways.</title>
        <authorList>
            <person name="Park J."/>
            <person name="Chen Y."/>
            <person name="Tishkoff D.X."/>
            <person name="Peng C."/>
            <person name="Tan M."/>
            <person name="Dai L."/>
            <person name="Xie Z."/>
            <person name="Zhang Y."/>
            <person name="Zwaans B.M."/>
            <person name="Skinner M.E."/>
            <person name="Lombard D.B."/>
            <person name="Zhao Y."/>
        </authorList>
    </citation>
    <scope>ACETYLATION [LARGE SCALE ANALYSIS] AT LYS-636; LYS-640; LYS-780 AND LYS-785</scope>
    <scope>IDENTIFICATION BY MASS SPECTROMETRY [LARGE SCALE ANALYSIS]</scope>
    <source>
        <tissue>Embryonic fibroblast</tissue>
    </source>
</reference>
<reference key="18">
    <citation type="journal article" date="2014" name="Cell Rep.">
        <title>SRC-2 is an essential coactivator for orchestrating metabolism and circadian rhythm.</title>
        <authorList>
            <person name="Stashi E."/>
            <person name="Lanz R.B."/>
            <person name="Mao J."/>
            <person name="Michailidis G."/>
            <person name="Zhu B."/>
            <person name="Kettner N.M."/>
            <person name="Putluri N."/>
            <person name="Reineke E.L."/>
            <person name="Reineke L.C."/>
            <person name="Dasgupta S."/>
            <person name="Dean A."/>
            <person name="Stevenson C.R."/>
            <person name="Sivasubramanian N."/>
            <person name="Sreekumar A."/>
            <person name="Demayo F."/>
            <person name="York B."/>
            <person name="Fu L."/>
            <person name="O'Malley B.W."/>
        </authorList>
    </citation>
    <scope>FUNCTION</scope>
    <scope>INDUCTION</scope>
    <scope>INTERACTION WITH CLOCK AND BMAL1</scope>
</reference>
<reference key="19">
    <citation type="journal article" date="2014" name="Mol. Cell. Proteomics">
        <title>Immunoaffinity enrichment and mass spectrometry analysis of protein methylation.</title>
        <authorList>
            <person name="Guo A."/>
            <person name="Gu H."/>
            <person name="Zhou J."/>
            <person name="Mulhern D."/>
            <person name="Wang Y."/>
            <person name="Lee K.A."/>
            <person name="Yang V."/>
            <person name="Aguiar M."/>
            <person name="Kornhauser J."/>
            <person name="Jia X."/>
            <person name="Ren J."/>
            <person name="Beausoleil S.A."/>
            <person name="Silva J.C."/>
            <person name="Vemulapalli V."/>
            <person name="Bedford M.T."/>
            <person name="Comb M.J."/>
        </authorList>
    </citation>
    <scope>METHYLATION [LARGE SCALE ANALYSIS] AT ARG-338; ARG-864; ARG-874; ARG-1173; ARG-1177; ARG-1190; ARG-1203; ARG-1221 AND ARG-1240</scope>
    <scope>IDENTIFICATION BY MASS SPECTROMETRY [LARGE SCALE ANALYSIS]</scope>
    <source>
        <tissue>Brain</tissue>
        <tissue>Embryo</tissue>
    </source>
</reference>
<reference key="20">
    <citation type="journal article" date="2019" name="Cell Rep.">
        <title>SIRT6 promotes hepatic beta-oxidation via activation of PPARalpha.</title>
        <authorList>
            <person name="Naiman S."/>
            <person name="Huynh F.K."/>
            <person name="Gil R."/>
            <person name="Glick Y."/>
            <person name="Shahar Y."/>
            <person name="Touitou N."/>
            <person name="Nahum L."/>
            <person name="Avivi M.Y."/>
            <person name="Roichman A."/>
            <person name="Kanfi Y."/>
            <person name="Gertler A.A."/>
            <person name="Doniger T."/>
            <person name="Ilkayeva O.R."/>
            <person name="Abramovich I."/>
            <person name="Yaron O."/>
            <person name="Lerrer B."/>
            <person name="Gottlieb E."/>
            <person name="Harris R.A."/>
            <person name="Gerber D."/>
            <person name="Hirschey M.D."/>
            <person name="Cohen H.Y."/>
        </authorList>
    </citation>
    <scope>FUNCTION</scope>
    <scope>ACETYLATION AT LYS-780</scope>
    <scope>DEACETYLATION BY SIRT6</scope>
</reference>